<dbReference type="EMBL" id="AE017226">
    <property type="protein sequence ID" value="AAS12192.1"/>
    <property type="molecule type" value="Genomic_DNA"/>
</dbReference>
<dbReference type="RefSeq" id="NP_972281.1">
    <property type="nucleotide sequence ID" value="NC_002967.9"/>
</dbReference>
<dbReference type="SMR" id="Q73M34"/>
<dbReference type="STRING" id="243275.TDE_1676"/>
<dbReference type="PaxDb" id="243275-TDE_1676"/>
<dbReference type="KEGG" id="tde:TDE_1676"/>
<dbReference type="PATRIC" id="fig|243275.7.peg.1602"/>
<dbReference type="eggNOG" id="COG0238">
    <property type="taxonomic scope" value="Bacteria"/>
</dbReference>
<dbReference type="HOGENOM" id="CLU_148710_0_3_12"/>
<dbReference type="OrthoDB" id="9812008at2"/>
<dbReference type="Proteomes" id="UP000008212">
    <property type="component" value="Chromosome"/>
</dbReference>
<dbReference type="GO" id="GO:0022627">
    <property type="term" value="C:cytosolic small ribosomal subunit"/>
    <property type="evidence" value="ECO:0007669"/>
    <property type="project" value="TreeGrafter"/>
</dbReference>
<dbReference type="GO" id="GO:0070181">
    <property type="term" value="F:small ribosomal subunit rRNA binding"/>
    <property type="evidence" value="ECO:0007669"/>
    <property type="project" value="TreeGrafter"/>
</dbReference>
<dbReference type="GO" id="GO:0003735">
    <property type="term" value="F:structural constituent of ribosome"/>
    <property type="evidence" value="ECO:0007669"/>
    <property type="project" value="InterPro"/>
</dbReference>
<dbReference type="GO" id="GO:0006412">
    <property type="term" value="P:translation"/>
    <property type="evidence" value="ECO:0007669"/>
    <property type="project" value="UniProtKB-UniRule"/>
</dbReference>
<dbReference type="Gene3D" id="4.10.640.10">
    <property type="entry name" value="Ribosomal protein S18"/>
    <property type="match status" value="1"/>
</dbReference>
<dbReference type="HAMAP" id="MF_00270">
    <property type="entry name" value="Ribosomal_bS18"/>
    <property type="match status" value="1"/>
</dbReference>
<dbReference type="InterPro" id="IPR001648">
    <property type="entry name" value="Ribosomal_bS18"/>
</dbReference>
<dbReference type="InterPro" id="IPR018275">
    <property type="entry name" value="Ribosomal_bS18_CS"/>
</dbReference>
<dbReference type="InterPro" id="IPR036870">
    <property type="entry name" value="Ribosomal_bS18_sf"/>
</dbReference>
<dbReference type="NCBIfam" id="TIGR00165">
    <property type="entry name" value="S18"/>
    <property type="match status" value="1"/>
</dbReference>
<dbReference type="PANTHER" id="PTHR13479">
    <property type="entry name" value="30S RIBOSOMAL PROTEIN S18"/>
    <property type="match status" value="1"/>
</dbReference>
<dbReference type="PANTHER" id="PTHR13479:SF40">
    <property type="entry name" value="SMALL RIBOSOMAL SUBUNIT PROTEIN BS18M"/>
    <property type="match status" value="1"/>
</dbReference>
<dbReference type="Pfam" id="PF01084">
    <property type="entry name" value="Ribosomal_S18"/>
    <property type="match status" value="1"/>
</dbReference>
<dbReference type="PRINTS" id="PR00974">
    <property type="entry name" value="RIBOSOMALS18"/>
</dbReference>
<dbReference type="SUPFAM" id="SSF46911">
    <property type="entry name" value="Ribosomal protein S18"/>
    <property type="match status" value="1"/>
</dbReference>
<dbReference type="PROSITE" id="PS00057">
    <property type="entry name" value="RIBOSOMAL_S18"/>
    <property type="match status" value="1"/>
</dbReference>
<accession>Q73M34</accession>
<comment type="function">
    <text evidence="1">Binds as a heterodimer with protein bS6 to the central domain of the 16S rRNA, where it helps stabilize the platform of the 30S subunit.</text>
</comment>
<comment type="subunit">
    <text evidence="1">Part of the 30S ribosomal subunit. Forms a tight heterodimer with protein bS6.</text>
</comment>
<comment type="similarity">
    <text evidence="1">Belongs to the bacterial ribosomal protein bS18 family.</text>
</comment>
<sequence>MEANMQENIREGEDKRKGRSFYRKKVCRFCAQKVKIDYKEPDALRRFITERGKILPRRITGTCAKHQRKLAVEIKRARAVALLPFVMNE</sequence>
<keyword id="KW-1185">Reference proteome</keyword>
<keyword id="KW-0687">Ribonucleoprotein</keyword>
<keyword id="KW-0689">Ribosomal protein</keyword>
<keyword id="KW-0694">RNA-binding</keyword>
<keyword id="KW-0699">rRNA-binding</keyword>
<evidence type="ECO:0000255" key="1">
    <source>
        <dbReference type="HAMAP-Rule" id="MF_00270"/>
    </source>
</evidence>
<evidence type="ECO:0000305" key="2"/>
<reference key="1">
    <citation type="journal article" date="2004" name="Proc. Natl. Acad. Sci. U.S.A.">
        <title>Comparison of the genome of the oral pathogen Treponema denticola with other spirochete genomes.</title>
        <authorList>
            <person name="Seshadri R."/>
            <person name="Myers G.S.A."/>
            <person name="Tettelin H."/>
            <person name="Eisen J.A."/>
            <person name="Heidelberg J.F."/>
            <person name="Dodson R.J."/>
            <person name="Davidsen T.M."/>
            <person name="DeBoy R.T."/>
            <person name="Fouts D.E."/>
            <person name="Haft D.H."/>
            <person name="Selengut J."/>
            <person name="Ren Q."/>
            <person name="Brinkac L.M."/>
            <person name="Madupu R."/>
            <person name="Kolonay J.F."/>
            <person name="Durkin S.A."/>
            <person name="Daugherty S.C."/>
            <person name="Shetty J."/>
            <person name="Shvartsbeyn A."/>
            <person name="Gebregeorgis E."/>
            <person name="Geer K."/>
            <person name="Tsegaye G."/>
            <person name="Malek J.A."/>
            <person name="Ayodeji B."/>
            <person name="Shatsman S."/>
            <person name="McLeod M.P."/>
            <person name="Smajs D."/>
            <person name="Howell J.K."/>
            <person name="Pal S."/>
            <person name="Amin A."/>
            <person name="Vashisth P."/>
            <person name="McNeill T.Z."/>
            <person name="Xiang Q."/>
            <person name="Sodergren E."/>
            <person name="Baca E."/>
            <person name="Weinstock G.M."/>
            <person name="Norris S.J."/>
            <person name="Fraser C.M."/>
            <person name="Paulsen I.T."/>
        </authorList>
    </citation>
    <scope>NUCLEOTIDE SEQUENCE [LARGE SCALE GENOMIC DNA]</scope>
    <source>
        <strain>ATCC 35405 / DSM 14222 / CIP 103919 / JCM 8153 / KCTC 15104</strain>
    </source>
</reference>
<protein>
    <recommendedName>
        <fullName evidence="1">Small ribosomal subunit protein bS18</fullName>
    </recommendedName>
    <alternativeName>
        <fullName evidence="2">30S ribosomal protein S18</fullName>
    </alternativeName>
</protein>
<feature type="chain" id="PRO_0000111253" description="Small ribosomal subunit protein bS18">
    <location>
        <begin position="1"/>
        <end position="89"/>
    </location>
</feature>
<organism>
    <name type="scientific">Treponema denticola (strain ATCC 35405 / DSM 14222 / CIP 103919 / JCM 8153 / KCTC 15104)</name>
    <dbReference type="NCBI Taxonomy" id="243275"/>
    <lineage>
        <taxon>Bacteria</taxon>
        <taxon>Pseudomonadati</taxon>
        <taxon>Spirochaetota</taxon>
        <taxon>Spirochaetia</taxon>
        <taxon>Spirochaetales</taxon>
        <taxon>Treponemataceae</taxon>
        <taxon>Treponema</taxon>
    </lineage>
</organism>
<name>RS18_TREDE</name>
<proteinExistence type="inferred from homology"/>
<gene>
    <name evidence="1" type="primary">rpsR</name>
    <name type="ordered locus">TDE_1676</name>
</gene>